<sequence>MIKKIGVLTSGGDAPGMNAAIRGVVRSALTEGLEVMGIYDGYLGLYEDRMVQLDRYSVSDMINRGGTFLGSARFPEFRDENIRAVAIENLKKRGIDALVVIGGDGSYMGAMRLTEMGFPCIGLPGTIDNDIKGTDYTIGFFTALSTVVEAIDRLRDTSSSHQRISVVEVMGRYCGDLTLAAAIAGGCEFVVVPEVEFSREDLVNEIKAGIAKGKKHAIVAITEHMCDVDELAHFIEKETGRETRATVLGHIQRGGSPVPYDRILASRMGAYAIDLLLAGYGGRCVGIQNEQLVHHDIIDAIENMKRPFKGDWLDCAKKLY</sequence>
<gene>
    <name evidence="1" type="primary">pfkA</name>
    <name type="ordered locus">ECIAI39_3080</name>
</gene>
<organism>
    <name type="scientific">Escherichia coli O7:K1 (strain IAI39 / ExPEC)</name>
    <dbReference type="NCBI Taxonomy" id="585057"/>
    <lineage>
        <taxon>Bacteria</taxon>
        <taxon>Pseudomonadati</taxon>
        <taxon>Pseudomonadota</taxon>
        <taxon>Gammaproteobacteria</taxon>
        <taxon>Enterobacterales</taxon>
        <taxon>Enterobacteriaceae</taxon>
        <taxon>Escherichia</taxon>
    </lineage>
</organism>
<comment type="function">
    <text evidence="1">Catalyzes the phosphorylation of D-fructose 6-phosphate to fructose 1,6-bisphosphate by ATP, the first committing step of glycolysis.</text>
</comment>
<comment type="catalytic activity">
    <reaction evidence="1">
        <text>beta-D-fructose 6-phosphate + ATP = beta-D-fructose 1,6-bisphosphate + ADP + H(+)</text>
        <dbReference type="Rhea" id="RHEA:16109"/>
        <dbReference type="ChEBI" id="CHEBI:15378"/>
        <dbReference type="ChEBI" id="CHEBI:30616"/>
        <dbReference type="ChEBI" id="CHEBI:32966"/>
        <dbReference type="ChEBI" id="CHEBI:57634"/>
        <dbReference type="ChEBI" id="CHEBI:456216"/>
        <dbReference type="EC" id="2.7.1.11"/>
    </reaction>
</comment>
<comment type="cofactor">
    <cofactor evidence="1">
        <name>Mg(2+)</name>
        <dbReference type="ChEBI" id="CHEBI:18420"/>
    </cofactor>
</comment>
<comment type="activity regulation">
    <text evidence="1">Allosterically activated by ADP and other diphosphonucleosides, and allosterically inhibited by phosphoenolpyruvate.</text>
</comment>
<comment type="pathway">
    <text evidence="1">Carbohydrate degradation; glycolysis; D-glyceraldehyde 3-phosphate and glycerone phosphate from D-glucose: step 3/4.</text>
</comment>
<comment type="subunit">
    <text evidence="1">Homotetramer.</text>
</comment>
<comment type="subcellular location">
    <subcellularLocation>
        <location evidence="1">Cytoplasm</location>
    </subcellularLocation>
</comment>
<comment type="similarity">
    <text evidence="1">Belongs to the phosphofructokinase type A (PFKA) family. ATP-dependent PFK group I subfamily. Prokaryotic clade 'B1' sub-subfamily.</text>
</comment>
<evidence type="ECO:0000255" key="1">
    <source>
        <dbReference type="HAMAP-Rule" id="MF_00339"/>
    </source>
</evidence>
<name>PFKA_ECO7I</name>
<keyword id="KW-0021">Allosteric enzyme</keyword>
<keyword id="KW-0067">ATP-binding</keyword>
<keyword id="KW-0963">Cytoplasm</keyword>
<keyword id="KW-0324">Glycolysis</keyword>
<keyword id="KW-0418">Kinase</keyword>
<keyword id="KW-0460">Magnesium</keyword>
<keyword id="KW-0479">Metal-binding</keyword>
<keyword id="KW-0547">Nucleotide-binding</keyword>
<keyword id="KW-0808">Transferase</keyword>
<accession>B7NU91</accession>
<feature type="chain" id="PRO_1000120038" description="ATP-dependent 6-phosphofructokinase isozyme 1">
    <location>
        <begin position="1"/>
        <end position="320"/>
    </location>
</feature>
<feature type="active site" description="Proton acceptor" evidence="1">
    <location>
        <position position="128"/>
    </location>
</feature>
<feature type="binding site" evidence="1">
    <location>
        <position position="12"/>
    </location>
    <ligand>
        <name>ATP</name>
        <dbReference type="ChEBI" id="CHEBI:30616"/>
    </ligand>
</feature>
<feature type="binding site" evidence="1">
    <location>
        <begin position="22"/>
        <end position="26"/>
    </location>
    <ligand>
        <name>ADP</name>
        <dbReference type="ChEBI" id="CHEBI:456216"/>
        <note>allosteric activator; ligand shared between dimeric partners</note>
    </ligand>
</feature>
<feature type="binding site" evidence="1">
    <location>
        <begin position="55"/>
        <end position="60"/>
    </location>
    <ligand>
        <name>ADP</name>
        <dbReference type="ChEBI" id="CHEBI:456216"/>
        <note>allosteric activator; ligand shared between dimeric partners</note>
    </ligand>
</feature>
<feature type="binding site" evidence="1">
    <location>
        <begin position="73"/>
        <end position="74"/>
    </location>
    <ligand>
        <name>ATP</name>
        <dbReference type="ChEBI" id="CHEBI:30616"/>
    </ligand>
</feature>
<feature type="binding site" evidence="1">
    <location>
        <begin position="103"/>
        <end position="106"/>
    </location>
    <ligand>
        <name>ATP</name>
        <dbReference type="ChEBI" id="CHEBI:30616"/>
    </ligand>
</feature>
<feature type="binding site" evidence="1">
    <location>
        <position position="104"/>
    </location>
    <ligand>
        <name>Mg(2+)</name>
        <dbReference type="ChEBI" id="CHEBI:18420"/>
        <note>catalytic</note>
    </ligand>
</feature>
<feature type="binding site" description="in other chain" evidence="1">
    <location>
        <begin position="126"/>
        <end position="128"/>
    </location>
    <ligand>
        <name>substrate</name>
        <note>ligand shared between dimeric partners</note>
    </ligand>
</feature>
<feature type="binding site" description="in other chain" evidence="1">
    <location>
        <position position="155"/>
    </location>
    <ligand>
        <name>ADP</name>
        <dbReference type="ChEBI" id="CHEBI:456216"/>
        <note>allosteric activator; ligand shared between dimeric partners</note>
    </ligand>
</feature>
<feature type="binding site" evidence="1">
    <location>
        <position position="163"/>
    </location>
    <ligand>
        <name>substrate</name>
        <note>ligand shared between dimeric partners</note>
    </ligand>
</feature>
<feature type="binding site" description="in other chain" evidence="1">
    <location>
        <begin position="170"/>
        <end position="172"/>
    </location>
    <ligand>
        <name>substrate</name>
        <note>ligand shared between dimeric partners</note>
    </ligand>
</feature>
<feature type="binding site" description="in other chain" evidence="1">
    <location>
        <begin position="186"/>
        <end position="188"/>
    </location>
    <ligand>
        <name>ADP</name>
        <dbReference type="ChEBI" id="CHEBI:456216"/>
        <note>allosteric activator; ligand shared between dimeric partners</note>
    </ligand>
</feature>
<feature type="binding site" description="in other chain" evidence="1">
    <location>
        <position position="212"/>
    </location>
    <ligand>
        <name>ADP</name>
        <dbReference type="ChEBI" id="CHEBI:456216"/>
        <note>allosteric activator; ligand shared between dimeric partners</note>
    </ligand>
</feature>
<feature type="binding site" description="in other chain" evidence="1">
    <location>
        <begin position="214"/>
        <end position="216"/>
    </location>
    <ligand>
        <name>ADP</name>
        <dbReference type="ChEBI" id="CHEBI:456216"/>
        <note>allosteric activator; ligand shared between dimeric partners</note>
    </ligand>
</feature>
<feature type="binding site" description="in other chain" evidence="1">
    <location>
        <position position="223"/>
    </location>
    <ligand>
        <name>substrate</name>
        <note>ligand shared between dimeric partners</note>
    </ligand>
</feature>
<feature type="binding site" evidence="1">
    <location>
        <position position="244"/>
    </location>
    <ligand>
        <name>substrate</name>
        <note>ligand shared between dimeric partners</note>
    </ligand>
</feature>
<feature type="binding site" description="in other chain" evidence="1">
    <location>
        <begin position="250"/>
        <end position="253"/>
    </location>
    <ligand>
        <name>substrate</name>
        <note>ligand shared between dimeric partners</note>
    </ligand>
</feature>
<protein>
    <recommendedName>
        <fullName evidence="1">ATP-dependent 6-phosphofructokinase isozyme 1</fullName>
        <shortName evidence="1">ATP-PFK 1</shortName>
        <shortName evidence="1">Phosphofructokinase 1</shortName>
        <ecNumber evidence="1">2.7.1.11</ecNumber>
    </recommendedName>
    <alternativeName>
        <fullName>6-phosphofructokinase isozyme I</fullName>
    </alternativeName>
    <alternativeName>
        <fullName evidence="1">Phosphohexokinase 1</fullName>
    </alternativeName>
</protein>
<proteinExistence type="inferred from homology"/>
<dbReference type="EC" id="2.7.1.11" evidence="1"/>
<dbReference type="EMBL" id="CU928164">
    <property type="protein sequence ID" value="CAR19199.1"/>
    <property type="molecule type" value="Genomic_DNA"/>
</dbReference>
<dbReference type="RefSeq" id="WP_000591795.1">
    <property type="nucleotide sequence ID" value="NC_011750.1"/>
</dbReference>
<dbReference type="RefSeq" id="YP_002409010.1">
    <property type="nucleotide sequence ID" value="NC_011750.1"/>
</dbReference>
<dbReference type="SMR" id="B7NU91"/>
<dbReference type="STRING" id="585057.ECIAI39_3080"/>
<dbReference type="GeneID" id="93777982"/>
<dbReference type="KEGG" id="ect:ECIAI39_3080"/>
<dbReference type="PATRIC" id="fig|585057.6.peg.3193"/>
<dbReference type="HOGENOM" id="CLU_020655_0_1_6"/>
<dbReference type="UniPathway" id="UPA00109">
    <property type="reaction ID" value="UER00182"/>
</dbReference>
<dbReference type="Proteomes" id="UP000000749">
    <property type="component" value="Chromosome"/>
</dbReference>
<dbReference type="GO" id="GO:0005945">
    <property type="term" value="C:6-phosphofructokinase complex"/>
    <property type="evidence" value="ECO:0007669"/>
    <property type="project" value="TreeGrafter"/>
</dbReference>
<dbReference type="GO" id="GO:0003872">
    <property type="term" value="F:6-phosphofructokinase activity"/>
    <property type="evidence" value="ECO:0007669"/>
    <property type="project" value="UniProtKB-UniRule"/>
</dbReference>
<dbReference type="GO" id="GO:0016208">
    <property type="term" value="F:AMP binding"/>
    <property type="evidence" value="ECO:0007669"/>
    <property type="project" value="TreeGrafter"/>
</dbReference>
<dbReference type="GO" id="GO:0005524">
    <property type="term" value="F:ATP binding"/>
    <property type="evidence" value="ECO:0007669"/>
    <property type="project" value="UniProtKB-KW"/>
</dbReference>
<dbReference type="GO" id="GO:0070095">
    <property type="term" value="F:fructose-6-phosphate binding"/>
    <property type="evidence" value="ECO:0007669"/>
    <property type="project" value="TreeGrafter"/>
</dbReference>
<dbReference type="GO" id="GO:0042802">
    <property type="term" value="F:identical protein binding"/>
    <property type="evidence" value="ECO:0007669"/>
    <property type="project" value="TreeGrafter"/>
</dbReference>
<dbReference type="GO" id="GO:0046872">
    <property type="term" value="F:metal ion binding"/>
    <property type="evidence" value="ECO:0007669"/>
    <property type="project" value="UniProtKB-KW"/>
</dbReference>
<dbReference type="GO" id="GO:0048029">
    <property type="term" value="F:monosaccharide binding"/>
    <property type="evidence" value="ECO:0007669"/>
    <property type="project" value="TreeGrafter"/>
</dbReference>
<dbReference type="GO" id="GO:0061621">
    <property type="term" value="P:canonical glycolysis"/>
    <property type="evidence" value="ECO:0007669"/>
    <property type="project" value="TreeGrafter"/>
</dbReference>
<dbReference type="GO" id="GO:0030388">
    <property type="term" value="P:fructose 1,6-bisphosphate metabolic process"/>
    <property type="evidence" value="ECO:0007669"/>
    <property type="project" value="TreeGrafter"/>
</dbReference>
<dbReference type="GO" id="GO:0006002">
    <property type="term" value="P:fructose 6-phosphate metabolic process"/>
    <property type="evidence" value="ECO:0007669"/>
    <property type="project" value="InterPro"/>
</dbReference>
<dbReference type="CDD" id="cd00763">
    <property type="entry name" value="Bacterial_PFK"/>
    <property type="match status" value="1"/>
</dbReference>
<dbReference type="FunFam" id="3.40.50.450:FF:000001">
    <property type="entry name" value="ATP-dependent 6-phosphofructokinase"/>
    <property type="match status" value="1"/>
</dbReference>
<dbReference type="FunFam" id="3.40.50.460:FF:000002">
    <property type="entry name" value="ATP-dependent 6-phosphofructokinase"/>
    <property type="match status" value="1"/>
</dbReference>
<dbReference type="Gene3D" id="3.40.50.450">
    <property type="match status" value="1"/>
</dbReference>
<dbReference type="Gene3D" id="3.40.50.460">
    <property type="entry name" value="Phosphofructokinase domain"/>
    <property type="match status" value="1"/>
</dbReference>
<dbReference type="HAMAP" id="MF_00339">
    <property type="entry name" value="Phosphofructokinase_I_B1"/>
    <property type="match status" value="1"/>
</dbReference>
<dbReference type="InterPro" id="IPR022953">
    <property type="entry name" value="ATP_PFK"/>
</dbReference>
<dbReference type="InterPro" id="IPR012003">
    <property type="entry name" value="ATP_PFK_prok-type"/>
</dbReference>
<dbReference type="InterPro" id="IPR012828">
    <property type="entry name" value="PFKA_ATP_prok"/>
</dbReference>
<dbReference type="InterPro" id="IPR015912">
    <property type="entry name" value="Phosphofructokinase_CS"/>
</dbReference>
<dbReference type="InterPro" id="IPR000023">
    <property type="entry name" value="Phosphofructokinase_dom"/>
</dbReference>
<dbReference type="InterPro" id="IPR035966">
    <property type="entry name" value="PKF_sf"/>
</dbReference>
<dbReference type="NCBIfam" id="TIGR02482">
    <property type="entry name" value="PFKA_ATP"/>
    <property type="match status" value="1"/>
</dbReference>
<dbReference type="NCBIfam" id="NF002872">
    <property type="entry name" value="PRK03202.1"/>
    <property type="match status" value="1"/>
</dbReference>
<dbReference type="PANTHER" id="PTHR13697:SF4">
    <property type="entry name" value="ATP-DEPENDENT 6-PHOSPHOFRUCTOKINASE"/>
    <property type="match status" value="1"/>
</dbReference>
<dbReference type="PANTHER" id="PTHR13697">
    <property type="entry name" value="PHOSPHOFRUCTOKINASE"/>
    <property type="match status" value="1"/>
</dbReference>
<dbReference type="Pfam" id="PF00365">
    <property type="entry name" value="PFK"/>
    <property type="match status" value="1"/>
</dbReference>
<dbReference type="PIRSF" id="PIRSF000532">
    <property type="entry name" value="ATP_PFK_prok"/>
    <property type="match status" value="1"/>
</dbReference>
<dbReference type="PRINTS" id="PR00476">
    <property type="entry name" value="PHFRCTKINASE"/>
</dbReference>
<dbReference type="SUPFAM" id="SSF53784">
    <property type="entry name" value="Phosphofructokinase"/>
    <property type="match status" value="1"/>
</dbReference>
<dbReference type="PROSITE" id="PS00433">
    <property type="entry name" value="PHOSPHOFRUCTOKINASE"/>
    <property type="match status" value="1"/>
</dbReference>
<reference key="1">
    <citation type="journal article" date="2009" name="PLoS Genet.">
        <title>Organised genome dynamics in the Escherichia coli species results in highly diverse adaptive paths.</title>
        <authorList>
            <person name="Touchon M."/>
            <person name="Hoede C."/>
            <person name="Tenaillon O."/>
            <person name="Barbe V."/>
            <person name="Baeriswyl S."/>
            <person name="Bidet P."/>
            <person name="Bingen E."/>
            <person name="Bonacorsi S."/>
            <person name="Bouchier C."/>
            <person name="Bouvet O."/>
            <person name="Calteau A."/>
            <person name="Chiapello H."/>
            <person name="Clermont O."/>
            <person name="Cruveiller S."/>
            <person name="Danchin A."/>
            <person name="Diard M."/>
            <person name="Dossat C."/>
            <person name="Karoui M.E."/>
            <person name="Frapy E."/>
            <person name="Garry L."/>
            <person name="Ghigo J.M."/>
            <person name="Gilles A.M."/>
            <person name="Johnson J."/>
            <person name="Le Bouguenec C."/>
            <person name="Lescat M."/>
            <person name="Mangenot S."/>
            <person name="Martinez-Jehanne V."/>
            <person name="Matic I."/>
            <person name="Nassif X."/>
            <person name="Oztas S."/>
            <person name="Petit M.A."/>
            <person name="Pichon C."/>
            <person name="Rouy Z."/>
            <person name="Ruf C.S."/>
            <person name="Schneider D."/>
            <person name="Tourret J."/>
            <person name="Vacherie B."/>
            <person name="Vallenet D."/>
            <person name="Medigue C."/>
            <person name="Rocha E.P.C."/>
            <person name="Denamur E."/>
        </authorList>
    </citation>
    <scope>NUCLEOTIDE SEQUENCE [LARGE SCALE GENOMIC DNA]</scope>
    <source>
        <strain>IAI39 / ExPEC</strain>
    </source>
</reference>